<feature type="chain" id="PRO_0000353454" description="DNA-directed RNA polymerase subunit beta'">
    <location>
        <begin position="1"/>
        <end position="1393"/>
    </location>
</feature>
<feature type="binding site" evidence="1">
    <location>
        <position position="70"/>
    </location>
    <ligand>
        <name>Zn(2+)</name>
        <dbReference type="ChEBI" id="CHEBI:29105"/>
        <label>1</label>
    </ligand>
</feature>
<feature type="binding site" evidence="1">
    <location>
        <position position="72"/>
    </location>
    <ligand>
        <name>Zn(2+)</name>
        <dbReference type="ChEBI" id="CHEBI:29105"/>
        <label>1</label>
    </ligand>
</feature>
<feature type="binding site" evidence="1">
    <location>
        <position position="85"/>
    </location>
    <ligand>
        <name>Zn(2+)</name>
        <dbReference type="ChEBI" id="CHEBI:29105"/>
        <label>1</label>
    </ligand>
</feature>
<feature type="binding site" evidence="1">
    <location>
        <position position="88"/>
    </location>
    <ligand>
        <name>Zn(2+)</name>
        <dbReference type="ChEBI" id="CHEBI:29105"/>
        <label>1</label>
    </ligand>
</feature>
<feature type="binding site" evidence="1">
    <location>
        <position position="461"/>
    </location>
    <ligand>
        <name>Mg(2+)</name>
        <dbReference type="ChEBI" id="CHEBI:18420"/>
    </ligand>
</feature>
<feature type="binding site" evidence="1">
    <location>
        <position position="463"/>
    </location>
    <ligand>
        <name>Mg(2+)</name>
        <dbReference type="ChEBI" id="CHEBI:18420"/>
    </ligand>
</feature>
<feature type="binding site" evidence="1">
    <location>
        <position position="465"/>
    </location>
    <ligand>
        <name>Mg(2+)</name>
        <dbReference type="ChEBI" id="CHEBI:18420"/>
    </ligand>
</feature>
<feature type="binding site" evidence="1">
    <location>
        <position position="815"/>
    </location>
    <ligand>
        <name>Zn(2+)</name>
        <dbReference type="ChEBI" id="CHEBI:29105"/>
        <label>2</label>
    </ligand>
</feature>
<feature type="binding site" evidence="1">
    <location>
        <position position="889"/>
    </location>
    <ligand>
        <name>Zn(2+)</name>
        <dbReference type="ChEBI" id="CHEBI:29105"/>
        <label>2</label>
    </ligand>
</feature>
<feature type="binding site" evidence="1">
    <location>
        <position position="896"/>
    </location>
    <ligand>
        <name>Zn(2+)</name>
        <dbReference type="ChEBI" id="CHEBI:29105"/>
        <label>2</label>
    </ligand>
</feature>
<feature type="binding site" evidence="1">
    <location>
        <position position="899"/>
    </location>
    <ligand>
        <name>Zn(2+)</name>
        <dbReference type="ChEBI" id="CHEBI:29105"/>
        <label>2</label>
    </ligand>
</feature>
<protein>
    <recommendedName>
        <fullName evidence="1">DNA-directed RNA polymerase subunit beta'</fullName>
        <shortName evidence="1">RNAP subunit beta'</shortName>
        <ecNumber evidence="1">2.7.7.6</ecNumber>
    </recommendedName>
    <alternativeName>
        <fullName evidence="1">RNA polymerase subunit beta'</fullName>
    </alternativeName>
    <alternativeName>
        <fullName evidence="1">Transcriptase subunit beta'</fullName>
    </alternativeName>
</protein>
<sequence>MRDLLKIHKLEQKEQDFDAIRVGLASPEKIRSWSYGEVKKPETINYRTFKPEREGLFCAKVFGPMKDFECLCGKYKRMKFRNVVCEKCGVEVTYSKVRRERMGHIELAAPVAHIWYLKSLPSRLGLLMDMTLKDIERVLYFEAFLVTDPGSTPLVHKQLLTEEMYFDALDEYGDDEFEAKMGAEAIQDVLSDMKLEVEAANLREDSLNTKSQTKLKKYNKRLKLVNSLIQSGNKPEWMVLKVLPILPSDLRPLVPLDGGRFATSDLNDLYRRVINRNNRLARLLELDAPEIIVRNEKRMLQEAVDSLIDNGRRGRAVMGNNRRPLKSISDMIKGKQGRFRQNLLGKRVDYSGRSVIVCGPYLKLHQCGLPKKMALELFKPFIYNRLQTKGLASTIKAAKKMVESESPEVWDILERVVHQHPVLLNRAPTLHRLGIQAFEPLLIEGKAIQLHPLVCGAFNADFDGDQMAVHVPLSEEAQLEARTLMLASNNVLHLASGEPIIVPSQDVILGLYYMTREMINQKGEGLIFVNATEALNAYESDSVTLHAKVKLRIQDYHKVNGKFEPSAKRIVDTTVGRAIFSRILPNGLSFNLINEAISKKVVSNLIHVCYRTQELKQTVMFADQMMYMGFQYSTKSGISFCSNDMIIPDSKAKMIEQAEIQVKDIQEQFSKGVVTDGERYNKVIDIWSRTSEKVAKAMMDEIGFENFTDVDGKIQKLASFNSVYMMADSGARGSPAQMRQLSGMRGLMAKPDGSIIETPITSNFREGLNNMQYFISTHGARKGLADTALKTANSGYLTRRLVDVGQDLVITENDCGTDNGLIMKAVIDGGNIVQTLGTATLGRVTAEDVLMPDSIEIFLEKGHLVSLDDSDKINELGIESIKVRSSITCDTRYGVCSSCYGNDMARGHKIGVGEAIGVIAAQSIGEPGTQLTMRTFHIGGAASASTAVSSINVNTDGIAHFENLKSITNENNDLVVISRSSEVTIRNNKGQEVERYKIPYGAIVHVQEGGAVTAKDKISDWDPHTHPIISEQAGRVIFVDFVEGMTVNKNTDPLTGLTFFEMIDEAERSTAAKGLKPLIKMVEENDSEVVLSTHYLPSTVKINLDDNQVIAAGGVLAKIPKDLSKTSDITGGLPRVADLFEARKAKDHSILAEATGVISFGNSTKSKDRLIITSSEGKATEMMIHKWSQINVFDGETIEKGDVISDGPSNPHDILRLLGVEALANYVVREVQNVYRLQGVNISDKHIEVIVKQMLRKVEILDAGDSSFVNGETAEYGRVIEMNYQLEAQGKDLINYQRLLMGITKASLATESFISAASFQETTRVLTEASTTGRVDTLQGLKENVIVGRLIPAGTGFKHHQVRRAQYVESITTQTVDAQQALSDQLKEAEEQT</sequence>
<name>RPOC_VESOH</name>
<accession>A5CW24</accession>
<comment type="function">
    <text evidence="1">DNA-dependent RNA polymerase catalyzes the transcription of DNA into RNA using the four ribonucleoside triphosphates as substrates.</text>
</comment>
<comment type="catalytic activity">
    <reaction evidence="1">
        <text>RNA(n) + a ribonucleoside 5'-triphosphate = RNA(n+1) + diphosphate</text>
        <dbReference type="Rhea" id="RHEA:21248"/>
        <dbReference type="Rhea" id="RHEA-COMP:14527"/>
        <dbReference type="Rhea" id="RHEA-COMP:17342"/>
        <dbReference type="ChEBI" id="CHEBI:33019"/>
        <dbReference type="ChEBI" id="CHEBI:61557"/>
        <dbReference type="ChEBI" id="CHEBI:140395"/>
        <dbReference type="EC" id="2.7.7.6"/>
    </reaction>
</comment>
<comment type="cofactor">
    <cofactor evidence="1">
        <name>Mg(2+)</name>
        <dbReference type="ChEBI" id="CHEBI:18420"/>
    </cofactor>
    <text evidence="1">Binds 1 Mg(2+) ion per subunit.</text>
</comment>
<comment type="cofactor">
    <cofactor evidence="1">
        <name>Zn(2+)</name>
        <dbReference type="ChEBI" id="CHEBI:29105"/>
    </cofactor>
    <text evidence="1">Binds 2 Zn(2+) ions per subunit.</text>
</comment>
<comment type="subunit">
    <text evidence="1">The RNAP catalytic core consists of 2 alpha, 1 beta, 1 beta' and 1 omega subunit. When a sigma factor is associated with the core the holoenzyme is formed, which can initiate transcription.</text>
</comment>
<comment type="similarity">
    <text evidence="1">Belongs to the RNA polymerase beta' chain family.</text>
</comment>
<dbReference type="EC" id="2.7.7.6" evidence="1"/>
<dbReference type="EMBL" id="AP009247">
    <property type="protein sequence ID" value="BAF61847.1"/>
    <property type="molecule type" value="Genomic_DNA"/>
</dbReference>
<dbReference type="RefSeq" id="WP_011930117.1">
    <property type="nucleotide sequence ID" value="NC_009465.1"/>
</dbReference>
<dbReference type="SMR" id="A5CW24"/>
<dbReference type="STRING" id="412965.COSY_0735"/>
<dbReference type="KEGG" id="vok:COSY_0735"/>
<dbReference type="eggNOG" id="COG0086">
    <property type="taxonomic scope" value="Bacteria"/>
</dbReference>
<dbReference type="HOGENOM" id="CLU_000524_3_1_6"/>
<dbReference type="OrthoDB" id="9815296at2"/>
<dbReference type="Proteomes" id="UP000000247">
    <property type="component" value="Chromosome"/>
</dbReference>
<dbReference type="GO" id="GO:0000428">
    <property type="term" value="C:DNA-directed RNA polymerase complex"/>
    <property type="evidence" value="ECO:0007669"/>
    <property type="project" value="UniProtKB-KW"/>
</dbReference>
<dbReference type="GO" id="GO:0003677">
    <property type="term" value="F:DNA binding"/>
    <property type="evidence" value="ECO:0007669"/>
    <property type="project" value="UniProtKB-UniRule"/>
</dbReference>
<dbReference type="GO" id="GO:0003899">
    <property type="term" value="F:DNA-directed RNA polymerase activity"/>
    <property type="evidence" value="ECO:0007669"/>
    <property type="project" value="UniProtKB-UniRule"/>
</dbReference>
<dbReference type="GO" id="GO:0000287">
    <property type="term" value="F:magnesium ion binding"/>
    <property type="evidence" value="ECO:0007669"/>
    <property type="project" value="UniProtKB-UniRule"/>
</dbReference>
<dbReference type="GO" id="GO:0008270">
    <property type="term" value="F:zinc ion binding"/>
    <property type="evidence" value="ECO:0007669"/>
    <property type="project" value="UniProtKB-UniRule"/>
</dbReference>
<dbReference type="GO" id="GO:0006351">
    <property type="term" value="P:DNA-templated transcription"/>
    <property type="evidence" value="ECO:0007669"/>
    <property type="project" value="UniProtKB-UniRule"/>
</dbReference>
<dbReference type="CDD" id="cd02655">
    <property type="entry name" value="RNAP_beta'_C"/>
    <property type="match status" value="1"/>
</dbReference>
<dbReference type="CDD" id="cd01609">
    <property type="entry name" value="RNAP_beta'_N"/>
    <property type="match status" value="1"/>
</dbReference>
<dbReference type="FunFam" id="1.10.132.30:FF:000003">
    <property type="entry name" value="DNA-directed RNA polymerase subunit beta"/>
    <property type="match status" value="1"/>
</dbReference>
<dbReference type="FunFam" id="1.10.150.390:FF:000002">
    <property type="entry name" value="DNA-directed RNA polymerase subunit beta"/>
    <property type="match status" value="1"/>
</dbReference>
<dbReference type="FunFam" id="4.10.860.120:FF:000001">
    <property type="entry name" value="DNA-directed RNA polymerase subunit beta"/>
    <property type="match status" value="1"/>
</dbReference>
<dbReference type="Gene3D" id="1.10.132.30">
    <property type="match status" value="1"/>
</dbReference>
<dbReference type="Gene3D" id="1.10.150.390">
    <property type="match status" value="1"/>
</dbReference>
<dbReference type="Gene3D" id="1.10.1790.20">
    <property type="match status" value="1"/>
</dbReference>
<dbReference type="Gene3D" id="1.10.40.90">
    <property type="match status" value="1"/>
</dbReference>
<dbReference type="Gene3D" id="2.40.40.20">
    <property type="match status" value="1"/>
</dbReference>
<dbReference type="Gene3D" id="2.40.50.100">
    <property type="match status" value="3"/>
</dbReference>
<dbReference type="Gene3D" id="4.10.860.120">
    <property type="entry name" value="RNA polymerase II, clamp domain"/>
    <property type="match status" value="1"/>
</dbReference>
<dbReference type="Gene3D" id="1.10.274.100">
    <property type="entry name" value="RNA polymerase Rpb1, domain 3"/>
    <property type="match status" value="1"/>
</dbReference>
<dbReference type="HAMAP" id="MF_01322">
    <property type="entry name" value="RNApol_bact_RpoC"/>
    <property type="match status" value="1"/>
</dbReference>
<dbReference type="InterPro" id="IPR045867">
    <property type="entry name" value="DNA-dir_RpoC_beta_prime"/>
</dbReference>
<dbReference type="InterPro" id="IPR012754">
    <property type="entry name" value="DNA-dir_RpoC_beta_prime_bact"/>
</dbReference>
<dbReference type="InterPro" id="IPR000722">
    <property type="entry name" value="RNA_pol_asu"/>
</dbReference>
<dbReference type="InterPro" id="IPR006592">
    <property type="entry name" value="RNA_pol_N"/>
</dbReference>
<dbReference type="InterPro" id="IPR007080">
    <property type="entry name" value="RNA_pol_Rpb1_1"/>
</dbReference>
<dbReference type="InterPro" id="IPR007066">
    <property type="entry name" value="RNA_pol_Rpb1_3"/>
</dbReference>
<dbReference type="InterPro" id="IPR042102">
    <property type="entry name" value="RNA_pol_Rpb1_3_sf"/>
</dbReference>
<dbReference type="InterPro" id="IPR007083">
    <property type="entry name" value="RNA_pol_Rpb1_4"/>
</dbReference>
<dbReference type="InterPro" id="IPR007081">
    <property type="entry name" value="RNA_pol_Rpb1_5"/>
</dbReference>
<dbReference type="InterPro" id="IPR044893">
    <property type="entry name" value="RNA_pol_Rpb1_clamp_domain"/>
</dbReference>
<dbReference type="InterPro" id="IPR038120">
    <property type="entry name" value="Rpb1_funnel_sf"/>
</dbReference>
<dbReference type="NCBIfam" id="TIGR02386">
    <property type="entry name" value="rpoC_TIGR"/>
    <property type="match status" value="1"/>
</dbReference>
<dbReference type="PANTHER" id="PTHR19376">
    <property type="entry name" value="DNA-DIRECTED RNA POLYMERASE"/>
    <property type="match status" value="1"/>
</dbReference>
<dbReference type="PANTHER" id="PTHR19376:SF54">
    <property type="entry name" value="DNA-DIRECTED RNA POLYMERASE SUBUNIT BETA"/>
    <property type="match status" value="1"/>
</dbReference>
<dbReference type="Pfam" id="PF04997">
    <property type="entry name" value="RNA_pol_Rpb1_1"/>
    <property type="match status" value="1"/>
</dbReference>
<dbReference type="Pfam" id="PF00623">
    <property type="entry name" value="RNA_pol_Rpb1_2"/>
    <property type="match status" value="2"/>
</dbReference>
<dbReference type="Pfam" id="PF04983">
    <property type="entry name" value="RNA_pol_Rpb1_3"/>
    <property type="match status" value="1"/>
</dbReference>
<dbReference type="Pfam" id="PF05000">
    <property type="entry name" value="RNA_pol_Rpb1_4"/>
    <property type="match status" value="1"/>
</dbReference>
<dbReference type="Pfam" id="PF04998">
    <property type="entry name" value="RNA_pol_Rpb1_5"/>
    <property type="match status" value="1"/>
</dbReference>
<dbReference type="SMART" id="SM00663">
    <property type="entry name" value="RPOLA_N"/>
    <property type="match status" value="1"/>
</dbReference>
<dbReference type="SUPFAM" id="SSF64484">
    <property type="entry name" value="beta and beta-prime subunits of DNA dependent RNA-polymerase"/>
    <property type="match status" value="1"/>
</dbReference>
<keyword id="KW-0240">DNA-directed RNA polymerase</keyword>
<keyword id="KW-0460">Magnesium</keyword>
<keyword id="KW-0479">Metal-binding</keyword>
<keyword id="KW-0548">Nucleotidyltransferase</keyword>
<keyword id="KW-1185">Reference proteome</keyword>
<keyword id="KW-0804">Transcription</keyword>
<keyword id="KW-0808">Transferase</keyword>
<keyword id="KW-0862">Zinc</keyword>
<reference key="1">
    <citation type="journal article" date="2007" name="Curr. Biol.">
        <title>Reduced genome of the thioautotrophic intracellular symbiont in a deep-sea clam, Calyptogena okutanii.</title>
        <authorList>
            <person name="Kuwahara H."/>
            <person name="Yoshida T."/>
            <person name="Takaki Y."/>
            <person name="Shimamura S."/>
            <person name="Nishi S."/>
            <person name="Harada M."/>
            <person name="Matsuyama K."/>
            <person name="Takishita K."/>
            <person name="Kawato M."/>
            <person name="Uematsu K."/>
            <person name="Fujiwara Y."/>
            <person name="Sato T."/>
            <person name="Kato C."/>
            <person name="Kitagawa M."/>
            <person name="Kato I."/>
            <person name="Maruyama T."/>
        </authorList>
    </citation>
    <scope>NUCLEOTIDE SEQUENCE [LARGE SCALE GENOMIC DNA]</scope>
    <source>
        <strain>HA</strain>
    </source>
</reference>
<gene>
    <name evidence="1" type="primary">rpoC</name>
    <name type="ordered locus">COSY_0735</name>
</gene>
<evidence type="ECO:0000255" key="1">
    <source>
        <dbReference type="HAMAP-Rule" id="MF_01322"/>
    </source>
</evidence>
<proteinExistence type="inferred from homology"/>
<organism>
    <name type="scientific">Vesicomyosocius okutanii subsp. Calyptogena okutanii (strain HA)</name>
    <dbReference type="NCBI Taxonomy" id="412965"/>
    <lineage>
        <taxon>Bacteria</taxon>
        <taxon>Pseudomonadati</taxon>
        <taxon>Pseudomonadota</taxon>
        <taxon>Gammaproteobacteria</taxon>
        <taxon>Candidatus Pseudothioglobaceae</taxon>
        <taxon>Candidatus Vesicomyosocius</taxon>
    </lineage>
</organism>